<proteinExistence type="inferred from homology"/>
<accession>Q32EX7</accession>
<name>LOLD_SHIDS</name>
<organism>
    <name type="scientific">Shigella dysenteriae serotype 1 (strain Sd197)</name>
    <dbReference type="NCBI Taxonomy" id="300267"/>
    <lineage>
        <taxon>Bacteria</taxon>
        <taxon>Pseudomonadati</taxon>
        <taxon>Pseudomonadota</taxon>
        <taxon>Gammaproteobacteria</taxon>
        <taxon>Enterobacterales</taxon>
        <taxon>Enterobacteriaceae</taxon>
        <taxon>Shigella</taxon>
    </lineage>
</organism>
<gene>
    <name evidence="1" type="primary">lolD</name>
    <name type="ordered locus">SDY_2033</name>
</gene>
<keyword id="KW-0067">ATP-binding</keyword>
<keyword id="KW-0997">Cell inner membrane</keyword>
<keyword id="KW-1003">Cell membrane</keyword>
<keyword id="KW-0472">Membrane</keyword>
<keyword id="KW-0547">Nucleotide-binding</keyword>
<keyword id="KW-1185">Reference proteome</keyword>
<keyword id="KW-1278">Translocase</keyword>
<keyword id="KW-0813">Transport</keyword>
<reference key="1">
    <citation type="journal article" date="2005" name="Nucleic Acids Res.">
        <title>Genome dynamics and diversity of Shigella species, the etiologic agents of bacillary dysentery.</title>
        <authorList>
            <person name="Yang F."/>
            <person name="Yang J."/>
            <person name="Zhang X."/>
            <person name="Chen L."/>
            <person name="Jiang Y."/>
            <person name="Yan Y."/>
            <person name="Tang X."/>
            <person name="Wang J."/>
            <person name="Xiong Z."/>
            <person name="Dong J."/>
            <person name="Xue Y."/>
            <person name="Zhu Y."/>
            <person name="Xu X."/>
            <person name="Sun L."/>
            <person name="Chen S."/>
            <person name="Nie H."/>
            <person name="Peng J."/>
            <person name="Xu J."/>
            <person name="Wang Y."/>
            <person name="Yuan Z."/>
            <person name="Wen Y."/>
            <person name="Yao Z."/>
            <person name="Shen Y."/>
            <person name="Qiang B."/>
            <person name="Hou Y."/>
            <person name="Yu J."/>
            <person name="Jin Q."/>
        </authorList>
    </citation>
    <scope>NUCLEOTIDE SEQUENCE [LARGE SCALE GENOMIC DNA]</scope>
    <source>
        <strain>Sd197</strain>
    </source>
</reference>
<comment type="function">
    <text evidence="1">Part of the ABC transporter complex LolCDE involved in the translocation of mature outer membrane-directed lipoproteins, from the inner membrane to the periplasmic chaperone, LolA. Responsible for the formation of the LolA-lipoprotein complex in an ATP-dependent manner.</text>
</comment>
<comment type="subunit">
    <text evidence="1">The complex is composed of two ATP-binding proteins (LolD) and two transmembrane proteins (LolC and LolE).</text>
</comment>
<comment type="subcellular location">
    <subcellularLocation>
        <location evidence="1">Cell inner membrane</location>
        <topology evidence="1">Peripheral membrane protein</topology>
    </subcellularLocation>
</comment>
<comment type="similarity">
    <text evidence="1">Belongs to the ABC transporter superfamily. Lipoprotein translocase (TC 3.A.1.125) family.</text>
</comment>
<comment type="sequence caution" evidence="2">
    <conflict type="erroneous initiation">
        <sequence resource="EMBL-CDS" id="ABB62128"/>
    </conflict>
</comment>
<sequence length="233" mass="25468">MNKILLQCDNLCKRYQEGSVQTDVLHNVSFSVSEGEMMAIVGSSGSGKSTLLHLLGGLDTPTSGDVIFNGQPMSKLSSAAKAELRNQKLGFIYQFHHLLPDFTALENVAMPLLIGKKKPAEINSRALEMLKAVGLDHRANHRPSELSGGERQRVAIARALVNNPRLVLADEPTGNLDARNADSIFQLLGELNRLQGTAFLVVTHDLQLAKRMSRQLEMRDGRLTAELSLMGAE</sequence>
<feature type="chain" id="PRO_0000272154" description="Lipoprotein-releasing system ATP-binding protein LolD">
    <location>
        <begin position="1"/>
        <end position="233"/>
    </location>
</feature>
<feature type="domain" description="ABC transporter" evidence="1">
    <location>
        <begin position="6"/>
        <end position="233"/>
    </location>
</feature>
<feature type="binding site" evidence="1">
    <location>
        <begin position="42"/>
        <end position="49"/>
    </location>
    <ligand>
        <name>ATP</name>
        <dbReference type="ChEBI" id="CHEBI:30616"/>
    </ligand>
</feature>
<protein>
    <recommendedName>
        <fullName evidence="1">Lipoprotein-releasing system ATP-binding protein LolD</fullName>
        <ecNumber evidence="1">7.6.2.-</ecNumber>
    </recommendedName>
</protein>
<dbReference type="EC" id="7.6.2.-" evidence="1"/>
<dbReference type="EMBL" id="CP000034">
    <property type="protein sequence ID" value="ABB62128.1"/>
    <property type="status" value="ALT_INIT"/>
    <property type="molecule type" value="Genomic_DNA"/>
</dbReference>
<dbReference type="RefSeq" id="WP_001033709.1">
    <property type="nucleotide sequence ID" value="NC_007606.1"/>
</dbReference>
<dbReference type="RefSeq" id="YP_403619.2">
    <property type="nucleotide sequence ID" value="NC_007606.1"/>
</dbReference>
<dbReference type="SMR" id="Q32EX7"/>
<dbReference type="STRING" id="300267.SDY_2033"/>
<dbReference type="EnsemblBacteria" id="ABB62128">
    <property type="protein sequence ID" value="ABB62128"/>
    <property type="gene ID" value="SDY_2033"/>
</dbReference>
<dbReference type="KEGG" id="sdy:SDY_2033"/>
<dbReference type="PATRIC" id="fig|300267.13.peg.2446"/>
<dbReference type="HOGENOM" id="CLU_000604_1_22_6"/>
<dbReference type="Proteomes" id="UP000002716">
    <property type="component" value="Chromosome"/>
</dbReference>
<dbReference type="GO" id="GO:0005886">
    <property type="term" value="C:plasma membrane"/>
    <property type="evidence" value="ECO:0007669"/>
    <property type="project" value="UniProtKB-SubCell"/>
</dbReference>
<dbReference type="GO" id="GO:0005524">
    <property type="term" value="F:ATP binding"/>
    <property type="evidence" value="ECO:0007669"/>
    <property type="project" value="UniProtKB-KW"/>
</dbReference>
<dbReference type="GO" id="GO:0016887">
    <property type="term" value="F:ATP hydrolysis activity"/>
    <property type="evidence" value="ECO:0007669"/>
    <property type="project" value="InterPro"/>
</dbReference>
<dbReference type="GO" id="GO:0022857">
    <property type="term" value="F:transmembrane transporter activity"/>
    <property type="evidence" value="ECO:0007669"/>
    <property type="project" value="TreeGrafter"/>
</dbReference>
<dbReference type="GO" id="GO:0044874">
    <property type="term" value="P:lipoprotein localization to outer membrane"/>
    <property type="evidence" value="ECO:0007669"/>
    <property type="project" value="TreeGrafter"/>
</dbReference>
<dbReference type="GO" id="GO:0089705">
    <property type="term" value="P:protein localization to outer membrane"/>
    <property type="evidence" value="ECO:0007669"/>
    <property type="project" value="TreeGrafter"/>
</dbReference>
<dbReference type="CDD" id="cd03255">
    <property type="entry name" value="ABC_MJ0796_LolCDE_FtsE"/>
    <property type="match status" value="1"/>
</dbReference>
<dbReference type="FunFam" id="3.40.50.300:FF:000230">
    <property type="entry name" value="Lipoprotein-releasing system ATP-binding protein LolD"/>
    <property type="match status" value="1"/>
</dbReference>
<dbReference type="Gene3D" id="3.40.50.300">
    <property type="entry name" value="P-loop containing nucleotide triphosphate hydrolases"/>
    <property type="match status" value="1"/>
</dbReference>
<dbReference type="InterPro" id="IPR003593">
    <property type="entry name" value="AAA+_ATPase"/>
</dbReference>
<dbReference type="InterPro" id="IPR003439">
    <property type="entry name" value="ABC_transporter-like_ATP-bd"/>
</dbReference>
<dbReference type="InterPro" id="IPR017871">
    <property type="entry name" value="ABC_transporter-like_CS"/>
</dbReference>
<dbReference type="InterPro" id="IPR015854">
    <property type="entry name" value="ABC_transpr_LolD-like"/>
</dbReference>
<dbReference type="InterPro" id="IPR011924">
    <property type="entry name" value="LolD_lipo_ATP-bd"/>
</dbReference>
<dbReference type="InterPro" id="IPR017911">
    <property type="entry name" value="MacB-like_ATP-bd"/>
</dbReference>
<dbReference type="InterPro" id="IPR027417">
    <property type="entry name" value="P-loop_NTPase"/>
</dbReference>
<dbReference type="NCBIfam" id="TIGR02211">
    <property type="entry name" value="LolD_lipo_ex"/>
    <property type="match status" value="1"/>
</dbReference>
<dbReference type="NCBIfam" id="NF008639">
    <property type="entry name" value="PRK11629.1"/>
    <property type="match status" value="1"/>
</dbReference>
<dbReference type="PANTHER" id="PTHR24220">
    <property type="entry name" value="IMPORT ATP-BINDING PROTEIN"/>
    <property type="match status" value="1"/>
</dbReference>
<dbReference type="PANTHER" id="PTHR24220:SF689">
    <property type="entry name" value="LIPOPROTEIN-RELEASING SYSTEM ATP-BINDING PROTEIN LOLD"/>
    <property type="match status" value="1"/>
</dbReference>
<dbReference type="Pfam" id="PF00005">
    <property type="entry name" value="ABC_tran"/>
    <property type="match status" value="1"/>
</dbReference>
<dbReference type="SMART" id="SM00382">
    <property type="entry name" value="AAA"/>
    <property type="match status" value="1"/>
</dbReference>
<dbReference type="SUPFAM" id="SSF52540">
    <property type="entry name" value="P-loop containing nucleoside triphosphate hydrolases"/>
    <property type="match status" value="1"/>
</dbReference>
<dbReference type="PROSITE" id="PS00211">
    <property type="entry name" value="ABC_TRANSPORTER_1"/>
    <property type="match status" value="1"/>
</dbReference>
<dbReference type="PROSITE" id="PS50893">
    <property type="entry name" value="ABC_TRANSPORTER_2"/>
    <property type="match status" value="1"/>
</dbReference>
<dbReference type="PROSITE" id="PS51244">
    <property type="entry name" value="LOLD"/>
    <property type="match status" value="1"/>
</dbReference>
<evidence type="ECO:0000255" key="1">
    <source>
        <dbReference type="HAMAP-Rule" id="MF_01708"/>
    </source>
</evidence>
<evidence type="ECO:0000305" key="2"/>